<name>APL3_DIAGR</name>
<proteinExistence type="evidence at protein level"/>
<sequence length="32" mass="3586">DAPSTTPPQDXEKKAAEFQKTFTEQXNQLANK</sequence>
<accession>P81471</accession>
<evidence type="ECO:0000250" key="1"/>
<evidence type="ECO:0000256" key="2">
    <source>
        <dbReference type="SAM" id="MobiDB-lite"/>
    </source>
</evidence>
<evidence type="ECO:0000305" key="3"/>
<keyword id="KW-0903">Direct protein sequencing</keyword>
<keyword id="KW-0445">Lipid transport</keyword>
<keyword id="KW-0964">Secreted</keyword>
<keyword id="KW-0813">Transport</keyword>
<reference key="1">
    <citation type="journal article" date="1992" name="Insect Biochem. Mol. Biol.">
        <title>Characteristics of apolipophorin-III of the southwestern corn borer, Diatraea grandiosella.</title>
        <authorList>
            <person name="Burks C.S."/>
            <person name="Shelby K.S."/>
            <person name="Chippendale G.M."/>
        </authorList>
    </citation>
    <scope>PROTEIN SEQUENCE</scope>
    <source>
        <tissue>Larval plasma</tissue>
    </source>
</reference>
<organism>
    <name type="scientific">Diatraea grandiosella</name>
    <name type="common">Southwestern corn borer</name>
    <dbReference type="NCBI Taxonomy" id="61289"/>
    <lineage>
        <taxon>Eukaryota</taxon>
        <taxon>Metazoa</taxon>
        <taxon>Ecdysozoa</taxon>
        <taxon>Arthropoda</taxon>
        <taxon>Hexapoda</taxon>
        <taxon>Insecta</taxon>
        <taxon>Pterygota</taxon>
        <taxon>Neoptera</taxon>
        <taxon>Endopterygota</taxon>
        <taxon>Lepidoptera</taxon>
        <taxon>Glossata</taxon>
        <taxon>Ditrysia</taxon>
        <taxon>Pyraloidea</taxon>
        <taxon>Crambidae</taxon>
        <taxon>Crambinae</taxon>
        <taxon>Diatraea</taxon>
    </lineage>
</organism>
<comment type="function">
    <text>Assists in the loading of diacylglycerol, generated from triacylglycerol stores in the fat body through the action of adipokinetic hormone, into lipophorin, the hemolymph lipoprotein. It increases the lipid carrying capacity of lipophorin by covering the expanding hydrophobic surface resulting from diacylglycerol uptake. It thus plays a critical role in the transport of lipids during flight in several species of insects.</text>
</comment>
<comment type="subunit">
    <text evidence="1">Equilibrium between a soluble monomer and a bound lipoprotein form. Apolipophorin-3 associates with lipophorin during lipid loading until each particle contains 9 or 14 molecules of apolipophorin-3 (By similarity).</text>
</comment>
<comment type="subcellular location">
    <subcellularLocation>
        <location evidence="1">Secreted</location>
    </subcellularLocation>
</comment>
<comment type="tissue specificity">
    <text>Hemolymph.</text>
</comment>
<comment type="similarity">
    <text evidence="3">Belongs to the insect apolipophorin-3 family.</text>
</comment>
<comment type="online information" name="Protein Spotlight">
    <link uri="https://www.proteinspotlight.org/back_issues/059"/>
    <text>Lipid freight - Issue 59 of June 2005</text>
</comment>
<protein>
    <recommendedName>
        <fullName>Apolipophorin-3</fullName>
    </recommendedName>
    <alternativeName>
        <fullName>Apolipophorin-III</fullName>
        <shortName>ApoLp-III</shortName>
    </alternativeName>
</protein>
<dbReference type="PIR" id="A61624">
    <property type="entry name" value="A61624"/>
</dbReference>
<dbReference type="GO" id="GO:0005576">
    <property type="term" value="C:extracellular region"/>
    <property type="evidence" value="ECO:0007669"/>
    <property type="project" value="UniProtKB-SubCell"/>
</dbReference>
<dbReference type="GO" id="GO:0006869">
    <property type="term" value="P:lipid transport"/>
    <property type="evidence" value="ECO:0007669"/>
    <property type="project" value="UniProtKB-KW"/>
</dbReference>
<dbReference type="Gene3D" id="1.20.120.20">
    <property type="entry name" value="Apolipoprotein"/>
    <property type="match status" value="1"/>
</dbReference>
<dbReference type="SUPFAM" id="SSF47857">
    <property type="entry name" value="Apolipophorin-III"/>
    <property type="match status" value="1"/>
</dbReference>
<feature type="chain" id="PRO_0000156824" description="Apolipophorin-3">
    <location>
        <begin position="1"/>
        <end position="32" status="greater than"/>
    </location>
</feature>
<feature type="region of interest" description="Disordered" evidence="2">
    <location>
        <begin position="1"/>
        <end position="32"/>
    </location>
</feature>
<feature type="compositionally biased region" description="Polar residues" evidence="2">
    <location>
        <begin position="20"/>
        <end position="32"/>
    </location>
</feature>
<feature type="non-terminal residue">
    <location>
        <position position="32"/>
    </location>
</feature>